<reference key="1">
    <citation type="journal article" date="2009" name="Proc. Natl. Acad. Sci. U.S.A.">
        <title>The genomic basis of trophic strategy in marine bacteria.</title>
        <authorList>
            <person name="Lauro F.M."/>
            <person name="McDougald D."/>
            <person name="Thomas T."/>
            <person name="Williams T.J."/>
            <person name="Egan S."/>
            <person name="Rice S."/>
            <person name="DeMaere M.Z."/>
            <person name="Ting L."/>
            <person name="Ertan H."/>
            <person name="Johnson J."/>
            <person name="Ferriera S."/>
            <person name="Lapidus A."/>
            <person name="Anderson I."/>
            <person name="Kyrpides N."/>
            <person name="Munk A.C."/>
            <person name="Detter C."/>
            <person name="Han C.S."/>
            <person name="Brown M.V."/>
            <person name="Robb F.T."/>
            <person name="Kjelleberg S."/>
            <person name="Cavicchioli R."/>
        </authorList>
    </citation>
    <scope>NUCLEOTIDE SEQUENCE [LARGE SCALE GENOMIC DNA]</scope>
    <source>
        <strain>DSM 13593 / LMG 18877 / RB2256</strain>
    </source>
</reference>
<dbReference type="EMBL" id="CP000356">
    <property type="protein sequence ID" value="ABF54857.1"/>
    <property type="molecule type" value="Genomic_DNA"/>
</dbReference>
<dbReference type="RefSeq" id="WP_011543419.1">
    <property type="nucleotide sequence ID" value="NC_008048.1"/>
</dbReference>
<dbReference type="STRING" id="317655.Sala_3154"/>
<dbReference type="KEGG" id="sal:Sala_3154"/>
<dbReference type="eggNOG" id="ENOG502ZZUX">
    <property type="taxonomic scope" value="Bacteria"/>
</dbReference>
<dbReference type="HOGENOM" id="CLU_1395337_0_0_5"/>
<dbReference type="OrthoDB" id="9811954at2"/>
<dbReference type="Proteomes" id="UP000006578">
    <property type="component" value="Chromosome"/>
</dbReference>
<dbReference type="GO" id="GO:0005886">
    <property type="term" value="C:plasma membrane"/>
    <property type="evidence" value="ECO:0007669"/>
    <property type="project" value="UniProtKB-SubCell"/>
</dbReference>
<dbReference type="HAMAP" id="MF_01514">
    <property type="entry name" value="UPF0314"/>
    <property type="match status" value="1"/>
</dbReference>
<dbReference type="InterPro" id="IPR019691">
    <property type="entry name" value="DUF2585"/>
</dbReference>
<dbReference type="NCBIfam" id="NF002099">
    <property type="entry name" value="PRK00944.1"/>
    <property type="match status" value="1"/>
</dbReference>
<dbReference type="Pfam" id="PF10755">
    <property type="entry name" value="DUF2585"/>
    <property type="match status" value="1"/>
</dbReference>
<sequence length="188" mass="20791">MVGGISRTGWLVAAALVALLAAILIFMGRPPICPCGTVSLWHGTVQSNQNSQQISDWYSFSHIIHGFIFYGVLRWIMPERALWVPLAIAIGTEGAWEILENSPLIIDRYREVTMAFGYSGDSVLNSVSDTLFMVAGFLAAGRMRWWVTAALAIAFELFTLWTIRDNLTLNVLMLVSPVEAIKDWQAGG</sequence>
<proteinExistence type="inferred from homology"/>
<comment type="subcellular location">
    <subcellularLocation>
        <location evidence="1">Cell membrane</location>
        <topology evidence="1">Multi-pass membrane protein</topology>
    </subcellularLocation>
</comment>
<comment type="similarity">
    <text evidence="1">Belongs to the UPF0314 family.</text>
</comment>
<protein>
    <recommendedName>
        <fullName evidence="1">UPF0314 protein Sala_3154</fullName>
    </recommendedName>
</protein>
<keyword id="KW-1003">Cell membrane</keyword>
<keyword id="KW-0472">Membrane</keyword>
<keyword id="KW-1185">Reference proteome</keyword>
<keyword id="KW-0812">Transmembrane</keyword>
<keyword id="KW-1133">Transmembrane helix</keyword>
<name>Y3154_SPHAL</name>
<organism>
    <name type="scientific">Sphingopyxis alaskensis (strain DSM 13593 / LMG 18877 / RB2256)</name>
    <name type="common">Sphingomonas alaskensis</name>
    <dbReference type="NCBI Taxonomy" id="317655"/>
    <lineage>
        <taxon>Bacteria</taxon>
        <taxon>Pseudomonadati</taxon>
        <taxon>Pseudomonadota</taxon>
        <taxon>Alphaproteobacteria</taxon>
        <taxon>Sphingomonadales</taxon>
        <taxon>Sphingomonadaceae</taxon>
        <taxon>Sphingopyxis</taxon>
    </lineage>
</organism>
<gene>
    <name type="ordered locus">Sala_3154</name>
</gene>
<evidence type="ECO:0000255" key="1">
    <source>
        <dbReference type="HAMAP-Rule" id="MF_01514"/>
    </source>
</evidence>
<feature type="chain" id="PRO_0000294262" description="UPF0314 protein Sala_3154">
    <location>
        <begin position="1"/>
        <end position="188"/>
    </location>
</feature>
<feature type="transmembrane region" description="Helical" evidence="1">
    <location>
        <begin position="8"/>
        <end position="28"/>
    </location>
</feature>
<feature type="transmembrane region" description="Helical" evidence="1">
    <location>
        <begin position="57"/>
        <end position="77"/>
    </location>
</feature>
<feature type="transmembrane region" description="Helical" evidence="1">
    <location>
        <begin position="143"/>
        <end position="163"/>
    </location>
</feature>
<accession>Q1GNB5</accession>